<dbReference type="EMBL" id="AE017332">
    <property type="protein sequence ID" value="AAV27346.1"/>
    <property type="molecule type" value="Genomic_DNA"/>
</dbReference>
<dbReference type="RefSeq" id="WP_011205842.1">
    <property type="nucleotide sequence ID" value="NC_006360.1"/>
</dbReference>
<dbReference type="SMR" id="Q602E7"/>
<dbReference type="KEGG" id="mhy:mhp003"/>
<dbReference type="eggNOG" id="COG0445">
    <property type="taxonomic scope" value="Bacteria"/>
</dbReference>
<dbReference type="HOGENOM" id="CLU_007831_2_2_14"/>
<dbReference type="PhylomeDB" id="Q602E7"/>
<dbReference type="Proteomes" id="UP000006822">
    <property type="component" value="Chromosome"/>
</dbReference>
<dbReference type="GO" id="GO:0005829">
    <property type="term" value="C:cytosol"/>
    <property type="evidence" value="ECO:0007669"/>
    <property type="project" value="TreeGrafter"/>
</dbReference>
<dbReference type="GO" id="GO:0050660">
    <property type="term" value="F:flavin adenine dinucleotide binding"/>
    <property type="evidence" value="ECO:0007669"/>
    <property type="project" value="UniProtKB-UniRule"/>
</dbReference>
<dbReference type="GO" id="GO:0030488">
    <property type="term" value="P:tRNA methylation"/>
    <property type="evidence" value="ECO:0007669"/>
    <property type="project" value="TreeGrafter"/>
</dbReference>
<dbReference type="GO" id="GO:0002098">
    <property type="term" value="P:tRNA wobble uridine modification"/>
    <property type="evidence" value="ECO:0007669"/>
    <property type="project" value="InterPro"/>
</dbReference>
<dbReference type="FunFam" id="1.10.150.570:FF:000001">
    <property type="entry name" value="tRNA uridine 5-carboxymethylaminomethyl modification enzyme MnmG"/>
    <property type="match status" value="1"/>
</dbReference>
<dbReference type="FunFam" id="3.50.50.60:FF:000002">
    <property type="entry name" value="tRNA uridine 5-carboxymethylaminomethyl modification enzyme MnmG"/>
    <property type="match status" value="1"/>
</dbReference>
<dbReference type="Gene3D" id="3.50.50.60">
    <property type="entry name" value="FAD/NAD(P)-binding domain"/>
    <property type="match status" value="2"/>
</dbReference>
<dbReference type="Gene3D" id="1.10.150.570">
    <property type="entry name" value="GidA associated domain, C-terminal subdomain"/>
    <property type="match status" value="1"/>
</dbReference>
<dbReference type="HAMAP" id="MF_00129">
    <property type="entry name" value="MnmG_GidA"/>
    <property type="match status" value="1"/>
</dbReference>
<dbReference type="InterPro" id="IPR036188">
    <property type="entry name" value="FAD/NAD-bd_sf"/>
</dbReference>
<dbReference type="InterPro" id="IPR004416">
    <property type="entry name" value="MnmG"/>
</dbReference>
<dbReference type="InterPro" id="IPR002218">
    <property type="entry name" value="MnmG-rel"/>
</dbReference>
<dbReference type="InterPro" id="IPR020595">
    <property type="entry name" value="MnmG-rel_CS"/>
</dbReference>
<dbReference type="InterPro" id="IPR026904">
    <property type="entry name" value="MnmG_C"/>
</dbReference>
<dbReference type="InterPro" id="IPR047001">
    <property type="entry name" value="MnmG_C_subdom"/>
</dbReference>
<dbReference type="InterPro" id="IPR044920">
    <property type="entry name" value="MnmG_C_subdom_sf"/>
</dbReference>
<dbReference type="InterPro" id="IPR040131">
    <property type="entry name" value="MnmG_N"/>
</dbReference>
<dbReference type="NCBIfam" id="TIGR00136">
    <property type="entry name" value="mnmG_gidA"/>
    <property type="match status" value="1"/>
</dbReference>
<dbReference type="PANTHER" id="PTHR11806">
    <property type="entry name" value="GLUCOSE INHIBITED DIVISION PROTEIN A"/>
    <property type="match status" value="1"/>
</dbReference>
<dbReference type="PANTHER" id="PTHR11806:SF0">
    <property type="entry name" value="PROTEIN MTO1 HOMOLOG, MITOCHONDRIAL"/>
    <property type="match status" value="1"/>
</dbReference>
<dbReference type="Pfam" id="PF01134">
    <property type="entry name" value="GIDA"/>
    <property type="match status" value="1"/>
</dbReference>
<dbReference type="Pfam" id="PF13932">
    <property type="entry name" value="SAM_GIDA_C"/>
    <property type="match status" value="1"/>
</dbReference>
<dbReference type="SMART" id="SM01228">
    <property type="entry name" value="GIDA_assoc_3"/>
    <property type="match status" value="1"/>
</dbReference>
<dbReference type="SUPFAM" id="SSF51905">
    <property type="entry name" value="FAD/NAD(P)-binding domain"/>
    <property type="match status" value="1"/>
</dbReference>
<dbReference type="PROSITE" id="PS01280">
    <property type="entry name" value="GIDA_1"/>
    <property type="match status" value="1"/>
</dbReference>
<dbReference type="PROSITE" id="PS01281">
    <property type="entry name" value="GIDA_2"/>
    <property type="match status" value="1"/>
</dbReference>
<name>MNMG_MESH2</name>
<reference key="1">
    <citation type="journal article" date="2004" name="J. Bacteriol.">
        <title>The genome sequence of Mycoplasma hyopneumoniae strain 232, the agent of swine mycoplasmosis.</title>
        <authorList>
            <person name="Minion F.C."/>
            <person name="Lefkowitz E.J."/>
            <person name="Madsen M.L."/>
            <person name="Cleary B.J."/>
            <person name="Swartzell S.M."/>
            <person name="Mahairas G.G."/>
        </authorList>
    </citation>
    <scope>NUCLEOTIDE SEQUENCE [LARGE SCALE GENOMIC DNA]</scope>
    <source>
        <strain>232</strain>
    </source>
</reference>
<keyword id="KW-0963">Cytoplasm</keyword>
<keyword id="KW-0274">FAD</keyword>
<keyword id="KW-0285">Flavoprotein</keyword>
<keyword id="KW-0520">NAD</keyword>
<keyword id="KW-0819">tRNA processing</keyword>
<feature type="chain" id="PRO_0000117133" description="tRNA uridine 5-carboxymethylaminomethyl modification enzyme MnmG">
    <location>
        <begin position="1"/>
        <end position="619"/>
    </location>
</feature>
<feature type="binding site" evidence="1">
    <location>
        <begin position="18"/>
        <end position="23"/>
    </location>
    <ligand>
        <name>FAD</name>
        <dbReference type="ChEBI" id="CHEBI:57692"/>
    </ligand>
</feature>
<feature type="binding site" evidence="1">
    <location>
        <position position="130"/>
    </location>
    <ligand>
        <name>FAD</name>
        <dbReference type="ChEBI" id="CHEBI:57692"/>
    </ligand>
</feature>
<feature type="binding site" evidence="1">
    <location>
        <position position="185"/>
    </location>
    <ligand>
        <name>FAD</name>
        <dbReference type="ChEBI" id="CHEBI:57692"/>
    </ligand>
</feature>
<feature type="binding site" evidence="1">
    <location>
        <begin position="277"/>
        <end position="291"/>
    </location>
    <ligand>
        <name>NAD(+)</name>
        <dbReference type="ChEBI" id="CHEBI:57540"/>
    </ligand>
</feature>
<feature type="binding site" evidence="1">
    <location>
        <position position="374"/>
    </location>
    <ligand>
        <name>FAD</name>
        <dbReference type="ChEBI" id="CHEBI:57692"/>
    </ligand>
</feature>
<evidence type="ECO:0000255" key="1">
    <source>
        <dbReference type="HAMAP-Rule" id="MF_00129"/>
    </source>
</evidence>
<gene>
    <name evidence="1" type="primary">mnmG</name>
    <name evidence="1" type="synonym">gidA</name>
    <name type="ordered locus">mhp003</name>
</gene>
<organism>
    <name type="scientific">Mesomycoplasma hyopneumoniae (strain 232)</name>
    <name type="common">Mycoplasma hyopneumoniae</name>
    <dbReference type="NCBI Taxonomy" id="295358"/>
    <lineage>
        <taxon>Bacteria</taxon>
        <taxon>Bacillati</taxon>
        <taxon>Mycoplasmatota</taxon>
        <taxon>Mycoplasmoidales</taxon>
        <taxon>Metamycoplasmataceae</taxon>
        <taxon>Mesomycoplasma</taxon>
    </lineage>
</organism>
<sequence length="619" mass="69289">MSKKSKNSSIEFDAIVVGGGHAGIEAVYALLKKKLKVVLITLDKKKLASMPCNPAIGGPAKGIITREIDALGGVQGKLSDLAMIQIKYLNESKGPAVLAIRAQIDKEKYSKLILKDLKKQENLLIIEDLVSELLVEKNRVFGLKTAKKQVFFSKTVIITTGTYMDSKVLRGSLAIPSGPDGQQTSNLLSNNLKTLGFELQRLKTGTPPRIFTSSIDFSKVEKEVLPVYNINFSFQSKHKLKKQISCYLTYTTAKTHDIINKNLGKSSMYSGLISGVGPRYCPSIEDKIVRFSEKPRHQIFFEPETKKQDIMYINGLSTSMPEDVQLEMVKTIPGLENAKIAKFGYAIEYDALNPLELKKSLETKRVKGLFMAGQINGTSGYEEAAAQGLVAGINAGQFVLGKKPVEILRNDGYIGVLIDDLVTKGTKEPYRMLTSRAEYRLILRNDNADIRMAKYALKSGLISKKEYLKIKAKYAKIDRKILELSKEFVSPKDELAKKYNLEKRISKLKLISWPNVNFKDILPDFEFGYELTVMARLKGYIQKQNSEAQKMIRLEKLLIPGELNYEKVANLSSEALDKFQKVRPKTIGEASRISGVNPADIQMLLFHIKVLKMQKVSKI</sequence>
<comment type="function">
    <text evidence="1">NAD-binding protein involved in the addition of a carboxymethylaminomethyl (cmnm) group at the wobble position (U34) of certain tRNAs, forming tRNA-cmnm(5)s(2)U34.</text>
</comment>
<comment type="cofactor">
    <cofactor evidence="1">
        <name>FAD</name>
        <dbReference type="ChEBI" id="CHEBI:57692"/>
    </cofactor>
</comment>
<comment type="subunit">
    <text evidence="1">Homodimer. Heterotetramer of two MnmE and two MnmG subunits.</text>
</comment>
<comment type="subcellular location">
    <subcellularLocation>
        <location evidence="1">Cytoplasm</location>
    </subcellularLocation>
</comment>
<comment type="similarity">
    <text evidence="1">Belongs to the MnmG family.</text>
</comment>
<proteinExistence type="inferred from homology"/>
<protein>
    <recommendedName>
        <fullName evidence="1">tRNA uridine 5-carboxymethylaminomethyl modification enzyme MnmG</fullName>
    </recommendedName>
    <alternativeName>
        <fullName evidence="1">Glucose-inhibited division protein A</fullName>
    </alternativeName>
</protein>
<accession>Q602E7</accession>